<protein>
    <recommendedName>
        <fullName evidence="1">tRNA pseudouridine synthase B</fullName>
        <ecNumber evidence="1">5.4.99.25</ecNumber>
    </recommendedName>
    <alternativeName>
        <fullName evidence="1">tRNA pseudouridine(55) synthase</fullName>
        <shortName evidence="1">Psi55 synthase</shortName>
    </alternativeName>
    <alternativeName>
        <fullName evidence="1">tRNA pseudouridylate synthase</fullName>
    </alternativeName>
    <alternativeName>
        <fullName evidence="1">tRNA-uridine isomerase</fullName>
    </alternativeName>
</protein>
<dbReference type="EC" id="5.4.99.25" evidence="1"/>
<dbReference type="EMBL" id="CP000127">
    <property type="protein sequence ID" value="ABA58578.1"/>
    <property type="molecule type" value="Genomic_DNA"/>
</dbReference>
<dbReference type="RefSeq" id="WP_011330865.1">
    <property type="nucleotide sequence ID" value="NC_007484.1"/>
</dbReference>
<dbReference type="SMR" id="Q3J9B8"/>
<dbReference type="FunCoup" id="Q3J9B8">
    <property type="interactions" value="515"/>
</dbReference>
<dbReference type="STRING" id="323261.Noc_2118"/>
<dbReference type="KEGG" id="noc:Noc_2118"/>
<dbReference type="eggNOG" id="COG0130">
    <property type="taxonomic scope" value="Bacteria"/>
</dbReference>
<dbReference type="HOGENOM" id="CLU_032087_0_3_6"/>
<dbReference type="InParanoid" id="Q3J9B8"/>
<dbReference type="Proteomes" id="UP000006838">
    <property type="component" value="Chromosome"/>
</dbReference>
<dbReference type="GO" id="GO:0003723">
    <property type="term" value="F:RNA binding"/>
    <property type="evidence" value="ECO:0007669"/>
    <property type="project" value="InterPro"/>
</dbReference>
<dbReference type="GO" id="GO:0160148">
    <property type="term" value="F:tRNA pseudouridine(55) synthase activity"/>
    <property type="evidence" value="ECO:0007669"/>
    <property type="project" value="UniProtKB-EC"/>
</dbReference>
<dbReference type="GO" id="GO:1990481">
    <property type="term" value="P:mRNA pseudouridine synthesis"/>
    <property type="evidence" value="ECO:0007669"/>
    <property type="project" value="TreeGrafter"/>
</dbReference>
<dbReference type="GO" id="GO:0031119">
    <property type="term" value="P:tRNA pseudouridine synthesis"/>
    <property type="evidence" value="ECO:0007669"/>
    <property type="project" value="UniProtKB-UniRule"/>
</dbReference>
<dbReference type="CDD" id="cd02573">
    <property type="entry name" value="PseudoU_synth_EcTruB"/>
    <property type="match status" value="1"/>
</dbReference>
<dbReference type="CDD" id="cd21152">
    <property type="entry name" value="PUA_TruB_bacterial"/>
    <property type="match status" value="1"/>
</dbReference>
<dbReference type="FunFam" id="2.30.130.10:FF:000012">
    <property type="entry name" value="tRNA pseudouridine synthase B"/>
    <property type="match status" value="1"/>
</dbReference>
<dbReference type="FunFam" id="3.30.2350.10:FF:000011">
    <property type="entry name" value="tRNA pseudouridine synthase B"/>
    <property type="match status" value="1"/>
</dbReference>
<dbReference type="Gene3D" id="3.30.2350.10">
    <property type="entry name" value="Pseudouridine synthase"/>
    <property type="match status" value="1"/>
</dbReference>
<dbReference type="Gene3D" id="2.30.130.10">
    <property type="entry name" value="PUA domain"/>
    <property type="match status" value="1"/>
</dbReference>
<dbReference type="HAMAP" id="MF_01080">
    <property type="entry name" value="TruB_bact"/>
    <property type="match status" value="1"/>
</dbReference>
<dbReference type="InterPro" id="IPR020103">
    <property type="entry name" value="PsdUridine_synth_cat_dom_sf"/>
</dbReference>
<dbReference type="InterPro" id="IPR002501">
    <property type="entry name" value="PsdUridine_synth_N"/>
</dbReference>
<dbReference type="InterPro" id="IPR015947">
    <property type="entry name" value="PUA-like_sf"/>
</dbReference>
<dbReference type="InterPro" id="IPR036974">
    <property type="entry name" value="PUA_sf"/>
</dbReference>
<dbReference type="InterPro" id="IPR014780">
    <property type="entry name" value="tRNA_psdUridine_synth_TruB"/>
</dbReference>
<dbReference type="InterPro" id="IPR015240">
    <property type="entry name" value="tRNA_sdUridine_synth_fam1_C"/>
</dbReference>
<dbReference type="InterPro" id="IPR032819">
    <property type="entry name" value="TruB_C"/>
</dbReference>
<dbReference type="NCBIfam" id="TIGR00431">
    <property type="entry name" value="TruB"/>
    <property type="match status" value="1"/>
</dbReference>
<dbReference type="PANTHER" id="PTHR13767:SF2">
    <property type="entry name" value="PSEUDOURIDYLATE SYNTHASE TRUB1"/>
    <property type="match status" value="1"/>
</dbReference>
<dbReference type="PANTHER" id="PTHR13767">
    <property type="entry name" value="TRNA-PSEUDOURIDINE SYNTHASE"/>
    <property type="match status" value="1"/>
</dbReference>
<dbReference type="Pfam" id="PF09157">
    <property type="entry name" value="TruB-C_2"/>
    <property type="match status" value="1"/>
</dbReference>
<dbReference type="Pfam" id="PF16198">
    <property type="entry name" value="TruB_C_2"/>
    <property type="match status" value="1"/>
</dbReference>
<dbReference type="Pfam" id="PF01509">
    <property type="entry name" value="TruB_N"/>
    <property type="match status" value="1"/>
</dbReference>
<dbReference type="SUPFAM" id="SSF55120">
    <property type="entry name" value="Pseudouridine synthase"/>
    <property type="match status" value="1"/>
</dbReference>
<dbReference type="SUPFAM" id="SSF88697">
    <property type="entry name" value="PUA domain-like"/>
    <property type="match status" value="1"/>
</dbReference>
<accession>Q3J9B8</accession>
<reference key="1">
    <citation type="journal article" date="2006" name="Appl. Environ. Microbiol.">
        <title>Complete genome sequence of the marine, chemolithoautotrophic, ammonia-oxidizing bacterium Nitrosococcus oceani ATCC 19707.</title>
        <authorList>
            <person name="Klotz M.G."/>
            <person name="Arp D.J."/>
            <person name="Chain P.S.G."/>
            <person name="El-Sheikh A.F."/>
            <person name="Hauser L.J."/>
            <person name="Hommes N.G."/>
            <person name="Larimer F.W."/>
            <person name="Malfatti S.A."/>
            <person name="Norton J.M."/>
            <person name="Poret-Peterson A.T."/>
            <person name="Vergez L.M."/>
            <person name="Ward B.B."/>
        </authorList>
    </citation>
    <scope>NUCLEOTIDE SEQUENCE [LARGE SCALE GENOMIC DNA]</scope>
    <source>
        <strain>ATCC 19707 / BCRC 17464 / JCM 30415 / NCIMB 11848 / C-107</strain>
    </source>
</reference>
<gene>
    <name evidence="1" type="primary">truB</name>
    <name type="ordered locus">Noc_2118</name>
</gene>
<sequence length="308" mass="33812">MKKQRRFQGQDIHGMLLLDKPVGISSNGALQRVKQIYQARKAGHTGSLDPLANGLLPICLGEATKLSGFLLEADKRYQVMCRLGVVTTTGDADGEVLETHPVNELDRDEVAKFLSGFSGPQEQVPPMYSAIKHQGQRLYKLARQGIEVERKSRQVTIHTIKLTELVNNELGFEVFCSKGTYIRTLAEDIGRALGCGAHVIALRRTQVGSFGASDMISLEELEMLAETNVEALGNLLLPVGQILADWPAVNLIADLAYYLRQGQSVRVPQAPSEGWVRLIECGKGFFGVGRITEDGRIAPRRLIFSQSG</sequence>
<feature type="chain" id="PRO_0000229364" description="tRNA pseudouridine synthase B">
    <location>
        <begin position="1"/>
        <end position="308"/>
    </location>
</feature>
<feature type="active site" description="Nucleophile" evidence="1">
    <location>
        <position position="49"/>
    </location>
</feature>
<name>TRUB_NITOC</name>
<keyword id="KW-0413">Isomerase</keyword>
<keyword id="KW-1185">Reference proteome</keyword>
<keyword id="KW-0819">tRNA processing</keyword>
<comment type="function">
    <text evidence="1">Responsible for synthesis of pseudouridine from uracil-55 in the psi GC loop of transfer RNAs.</text>
</comment>
<comment type="catalytic activity">
    <reaction evidence="1">
        <text>uridine(55) in tRNA = pseudouridine(55) in tRNA</text>
        <dbReference type="Rhea" id="RHEA:42532"/>
        <dbReference type="Rhea" id="RHEA-COMP:10101"/>
        <dbReference type="Rhea" id="RHEA-COMP:10102"/>
        <dbReference type="ChEBI" id="CHEBI:65314"/>
        <dbReference type="ChEBI" id="CHEBI:65315"/>
        <dbReference type="EC" id="5.4.99.25"/>
    </reaction>
</comment>
<comment type="similarity">
    <text evidence="1">Belongs to the pseudouridine synthase TruB family. Type 1 subfamily.</text>
</comment>
<organism>
    <name type="scientific">Nitrosococcus oceani (strain ATCC 19707 / BCRC 17464 / JCM 30415 / NCIMB 11848 / C-107)</name>
    <dbReference type="NCBI Taxonomy" id="323261"/>
    <lineage>
        <taxon>Bacteria</taxon>
        <taxon>Pseudomonadati</taxon>
        <taxon>Pseudomonadota</taxon>
        <taxon>Gammaproteobacteria</taxon>
        <taxon>Chromatiales</taxon>
        <taxon>Chromatiaceae</taxon>
        <taxon>Nitrosococcus</taxon>
    </lineage>
</organism>
<evidence type="ECO:0000255" key="1">
    <source>
        <dbReference type="HAMAP-Rule" id="MF_01080"/>
    </source>
</evidence>
<proteinExistence type="inferred from homology"/>